<feature type="chain" id="PRO_0000297911" description="Protein BANP">
    <location>
        <begin position="1"/>
        <end position="548"/>
    </location>
</feature>
<feature type="domain" description="BEN" evidence="3">
    <location>
        <begin position="234"/>
        <end position="330"/>
    </location>
</feature>
<feature type="region of interest" description="Interaction with CUX1 and HDAC1" evidence="8 11">
    <location>
        <begin position="160"/>
        <end position="350"/>
    </location>
</feature>
<feature type="region of interest" description="Disordered" evidence="4">
    <location>
        <begin position="174"/>
        <end position="206"/>
    </location>
</feature>
<feature type="region of interest" description="Disordered" evidence="4">
    <location>
        <begin position="335"/>
        <end position="368"/>
    </location>
</feature>
<feature type="region of interest" description="DNA-binding">
    <location>
        <begin position="350"/>
        <end position="400"/>
    </location>
</feature>
<feature type="coiled-coil region" evidence="2">
    <location>
        <begin position="65"/>
        <end position="98"/>
    </location>
</feature>
<feature type="compositionally biased region" description="Polar residues" evidence="4">
    <location>
        <begin position="197"/>
        <end position="206"/>
    </location>
</feature>
<feature type="compositionally biased region" description="Low complexity" evidence="4">
    <location>
        <begin position="343"/>
        <end position="354"/>
    </location>
</feature>
<feature type="site" description="Required for TP53 activation" evidence="12">
    <location>
        <position position="347"/>
    </location>
</feature>
<feature type="modified residue" description="Phosphoserine" evidence="1">
    <location>
        <position position="19"/>
    </location>
</feature>
<feature type="modified residue" description="Phosphoserine" evidence="1">
    <location>
        <position position="98"/>
    </location>
</feature>
<feature type="modified residue" description="Phosphoserine" evidence="1">
    <location>
        <position position="108"/>
    </location>
</feature>
<feature type="modified residue" description="N6-acetyllysine" evidence="21">
    <location>
        <position position="283"/>
    </location>
</feature>
<feature type="modified residue" description="Phosphothreonine" evidence="13">
    <location>
        <position position="345"/>
    </location>
</feature>
<feature type="modified residue" description="Phosphoserine" evidence="19">
    <location>
        <position position="347"/>
    </location>
</feature>
<feature type="modified residue" description="Phosphothreonine" evidence="13">
    <location>
        <position position="360"/>
    </location>
</feature>
<feature type="cross-link" description="Glycyl lysine isopeptide (Lys-Gly) (interchain with G-Cter in SUMO2)" evidence="1">
    <location>
        <position position="141"/>
    </location>
</feature>
<feature type="splice variant" id="VSP_027403" description="In isoform 2 and isoform 3." evidence="14 15 17">
    <location>
        <begin position="122"/>
        <end position="160"/>
    </location>
</feature>
<feature type="splice variant" id="VSP_027404" description="In isoform 3." evidence="15 17">
    <location>
        <begin position="399"/>
        <end position="401"/>
    </location>
</feature>
<feature type="splice variant" id="VSP_027405" description="In isoform 4." evidence="16">
    <location>
        <begin position="435"/>
        <end position="476"/>
    </location>
</feature>
<feature type="mutagenesis site" description="Reduces phosphorylation and abolishes cytoplasmic localization; when associated with A-360." evidence="13">
    <original>T</original>
    <variation>A</variation>
    <location>
        <position position="345"/>
    </location>
</feature>
<feature type="mutagenesis site" description="Impairs TP53 activation." evidence="12">
    <original>S</original>
    <variation>A</variation>
    <location>
        <position position="347"/>
    </location>
</feature>
<feature type="mutagenesis site" description="No effect on TP53 activation." evidence="12">
    <original>S</original>
    <variation>A</variation>
    <location>
        <position position="348"/>
    </location>
</feature>
<feature type="mutagenesis site" description="No effect on TP53 activation." evidence="12">
    <original>S</original>
    <variation>A</variation>
    <location>
        <position position="349"/>
    </location>
</feature>
<feature type="mutagenesis site" description="No effect on TP53 activation." evidence="12">
    <original>S</original>
    <variation>A</variation>
    <location>
        <position position="350"/>
    </location>
</feature>
<feature type="mutagenesis site" description="Reduces phosphorylation and abolishes cytoplasmic localization; when associated with A-345." evidence="13">
    <original>T</original>
    <variation>A</variation>
    <location>
        <position position="360"/>
    </location>
</feature>
<feature type="sequence conflict" description="In Ref. 2; AAG16659." evidence="18" ref="2">
    <original>N</original>
    <variation>I</variation>
    <location>
        <position position="131"/>
    </location>
</feature>
<feature type="sequence conflict" description="In Ref. 2; AAG16659." evidence="18" ref="2">
    <original>S</original>
    <variation>I</variation>
    <location>
        <position position="147"/>
    </location>
</feature>
<evidence type="ECO:0000250" key="1">
    <source>
        <dbReference type="UniProtKB" id="Q8N9N5"/>
    </source>
</evidence>
<evidence type="ECO:0000255" key="2"/>
<evidence type="ECO:0000255" key="3">
    <source>
        <dbReference type="PROSITE-ProRule" id="PRU00784"/>
    </source>
</evidence>
<evidence type="ECO:0000256" key="4">
    <source>
        <dbReference type="SAM" id="MobiDB-lite"/>
    </source>
</evidence>
<evidence type="ECO:0000269" key="5">
    <source>
    </source>
</evidence>
<evidence type="ECO:0000269" key="6">
    <source>
    </source>
</evidence>
<evidence type="ECO:0000269" key="7">
    <source>
    </source>
</evidence>
<evidence type="ECO:0000269" key="8">
    <source>
    </source>
</evidence>
<evidence type="ECO:0000269" key="9">
    <source>
    </source>
</evidence>
<evidence type="ECO:0000269" key="10">
    <source>
    </source>
</evidence>
<evidence type="ECO:0000269" key="11">
    <source>
    </source>
</evidence>
<evidence type="ECO:0000269" key="12">
    <source>
    </source>
</evidence>
<evidence type="ECO:0000269" key="13">
    <source>
    </source>
</evidence>
<evidence type="ECO:0000303" key="14">
    <source>
    </source>
</evidence>
<evidence type="ECO:0000303" key="15">
    <source>
    </source>
</evidence>
<evidence type="ECO:0000303" key="16">
    <source>
    </source>
</evidence>
<evidence type="ECO:0000303" key="17">
    <source>
    </source>
</evidence>
<evidence type="ECO:0000305" key="18"/>
<evidence type="ECO:0000305" key="19">
    <source>
    </source>
</evidence>
<evidence type="ECO:0000305" key="20">
    <source>
    </source>
</evidence>
<evidence type="ECO:0007744" key="21">
    <source>
    </source>
</evidence>
<reference key="1">
    <citation type="journal article" date="2000" name="Gene">
        <title>Identification and molecular analysis of BANP.</title>
        <authorList>
            <person name="Birot A.-M."/>
            <person name="Duret L."/>
            <person name="Bartholin L."/>
            <person name="Santalucia B."/>
            <person name="Tigaud I."/>
            <person name="Magaud J.-P."/>
            <person name="Rouault J.-P."/>
        </authorList>
    </citation>
    <scope>NUCLEOTIDE SEQUENCE [MRNA] (ISOFORM 2)</scope>
    <scope>TISSUE SPECIFICITY</scope>
    <scope>SUBCELLULAR LOCATION</scope>
    <source>
        <tissue>Embryo</tissue>
    </source>
</reference>
<reference key="2">
    <citation type="journal article" date="2000" name="Genomics">
        <title>SMAR1, a novel, alternatively spliced gene product, binds the Scaffold/Matrix-associated region at the T cell receptor beta locus.</title>
        <authorList>
            <person name="Chattopadhyay S."/>
            <person name="Kaul R."/>
            <person name="Charest A."/>
            <person name="Housman D."/>
            <person name="Chen J."/>
        </authorList>
    </citation>
    <scope>NUCLEOTIDE SEQUENCE [MRNA] (ISOFORMS 1 AND 3)</scope>
    <scope>TISSUE SPECIFICITY</scope>
    <scope>FUNCTION</scope>
    <source>
        <strain>C57BL/6J</strain>
        <tissue>Thymus</tissue>
    </source>
</reference>
<reference key="3">
    <citation type="journal article" date="2005" name="Science">
        <title>The transcriptional landscape of the mammalian genome.</title>
        <authorList>
            <person name="Carninci P."/>
            <person name="Kasukawa T."/>
            <person name="Katayama S."/>
            <person name="Gough J."/>
            <person name="Frith M.C."/>
            <person name="Maeda N."/>
            <person name="Oyama R."/>
            <person name="Ravasi T."/>
            <person name="Lenhard B."/>
            <person name="Wells C."/>
            <person name="Kodzius R."/>
            <person name="Shimokawa K."/>
            <person name="Bajic V.B."/>
            <person name="Brenner S.E."/>
            <person name="Batalov S."/>
            <person name="Forrest A.R."/>
            <person name="Zavolan M."/>
            <person name="Davis M.J."/>
            <person name="Wilming L.G."/>
            <person name="Aidinis V."/>
            <person name="Allen J.E."/>
            <person name="Ambesi-Impiombato A."/>
            <person name="Apweiler R."/>
            <person name="Aturaliya R.N."/>
            <person name="Bailey T.L."/>
            <person name="Bansal M."/>
            <person name="Baxter L."/>
            <person name="Beisel K.W."/>
            <person name="Bersano T."/>
            <person name="Bono H."/>
            <person name="Chalk A.M."/>
            <person name="Chiu K.P."/>
            <person name="Choudhary V."/>
            <person name="Christoffels A."/>
            <person name="Clutterbuck D.R."/>
            <person name="Crowe M.L."/>
            <person name="Dalla E."/>
            <person name="Dalrymple B.P."/>
            <person name="de Bono B."/>
            <person name="Della Gatta G."/>
            <person name="di Bernardo D."/>
            <person name="Down T."/>
            <person name="Engstrom P."/>
            <person name="Fagiolini M."/>
            <person name="Faulkner G."/>
            <person name="Fletcher C.F."/>
            <person name="Fukushima T."/>
            <person name="Furuno M."/>
            <person name="Futaki S."/>
            <person name="Gariboldi M."/>
            <person name="Georgii-Hemming P."/>
            <person name="Gingeras T.R."/>
            <person name="Gojobori T."/>
            <person name="Green R.E."/>
            <person name="Gustincich S."/>
            <person name="Harbers M."/>
            <person name="Hayashi Y."/>
            <person name="Hensch T.K."/>
            <person name="Hirokawa N."/>
            <person name="Hill D."/>
            <person name="Huminiecki L."/>
            <person name="Iacono M."/>
            <person name="Ikeo K."/>
            <person name="Iwama A."/>
            <person name="Ishikawa T."/>
            <person name="Jakt M."/>
            <person name="Kanapin A."/>
            <person name="Katoh M."/>
            <person name="Kawasawa Y."/>
            <person name="Kelso J."/>
            <person name="Kitamura H."/>
            <person name="Kitano H."/>
            <person name="Kollias G."/>
            <person name="Krishnan S.P."/>
            <person name="Kruger A."/>
            <person name="Kummerfeld S.K."/>
            <person name="Kurochkin I.V."/>
            <person name="Lareau L.F."/>
            <person name="Lazarevic D."/>
            <person name="Lipovich L."/>
            <person name="Liu J."/>
            <person name="Liuni S."/>
            <person name="McWilliam S."/>
            <person name="Madan Babu M."/>
            <person name="Madera M."/>
            <person name="Marchionni L."/>
            <person name="Matsuda H."/>
            <person name="Matsuzawa S."/>
            <person name="Miki H."/>
            <person name="Mignone F."/>
            <person name="Miyake S."/>
            <person name="Morris K."/>
            <person name="Mottagui-Tabar S."/>
            <person name="Mulder N."/>
            <person name="Nakano N."/>
            <person name="Nakauchi H."/>
            <person name="Ng P."/>
            <person name="Nilsson R."/>
            <person name="Nishiguchi S."/>
            <person name="Nishikawa S."/>
            <person name="Nori F."/>
            <person name="Ohara O."/>
            <person name="Okazaki Y."/>
            <person name="Orlando V."/>
            <person name="Pang K.C."/>
            <person name="Pavan W.J."/>
            <person name="Pavesi G."/>
            <person name="Pesole G."/>
            <person name="Petrovsky N."/>
            <person name="Piazza S."/>
            <person name="Reed J."/>
            <person name="Reid J.F."/>
            <person name="Ring B.Z."/>
            <person name="Ringwald M."/>
            <person name="Rost B."/>
            <person name="Ruan Y."/>
            <person name="Salzberg S.L."/>
            <person name="Sandelin A."/>
            <person name="Schneider C."/>
            <person name="Schoenbach C."/>
            <person name="Sekiguchi K."/>
            <person name="Semple C.A."/>
            <person name="Seno S."/>
            <person name="Sessa L."/>
            <person name="Sheng Y."/>
            <person name="Shibata Y."/>
            <person name="Shimada H."/>
            <person name="Shimada K."/>
            <person name="Silva D."/>
            <person name="Sinclair B."/>
            <person name="Sperling S."/>
            <person name="Stupka E."/>
            <person name="Sugiura K."/>
            <person name="Sultana R."/>
            <person name="Takenaka Y."/>
            <person name="Taki K."/>
            <person name="Tammoja K."/>
            <person name="Tan S.L."/>
            <person name="Tang S."/>
            <person name="Taylor M.S."/>
            <person name="Tegner J."/>
            <person name="Teichmann S.A."/>
            <person name="Ueda H.R."/>
            <person name="van Nimwegen E."/>
            <person name="Verardo R."/>
            <person name="Wei C.L."/>
            <person name="Yagi K."/>
            <person name="Yamanishi H."/>
            <person name="Zabarovsky E."/>
            <person name="Zhu S."/>
            <person name="Zimmer A."/>
            <person name="Hide W."/>
            <person name="Bult C."/>
            <person name="Grimmond S.M."/>
            <person name="Teasdale R.D."/>
            <person name="Liu E.T."/>
            <person name="Brusic V."/>
            <person name="Quackenbush J."/>
            <person name="Wahlestedt C."/>
            <person name="Mattick J.S."/>
            <person name="Hume D.A."/>
            <person name="Kai C."/>
            <person name="Sasaki D."/>
            <person name="Tomaru Y."/>
            <person name="Fukuda S."/>
            <person name="Kanamori-Katayama M."/>
            <person name="Suzuki M."/>
            <person name="Aoki J."/>
            <person name="Arakawa T."/>
            <person name="Iida J."/>
            <person name="Imamura K."/>
            <person name="Itoh M."/>
            <person name="Kato T."/>
            <person name="Kawaji H."/>
            <person name="Kawagashira N."/>
            <person name="Kawashima T."/>
            <person name="Kojima M."/>
            <person name="Kondo S."/>
            <person name="Konno H."/>
            <person name="Nakano K."/>
            <person name="Ninomiya N."/>
            <person name="Nishio T."/>
            <person name="Okada M."/>
            <person name="Plessy C."/>
            <person name="Shibata K."/>
            <person name="Shiraki T."/>
            <person name="Suzuki S."/>
            <person name="Tagami M."/>
            <person name="Waki K."/>
            <person name="Watahiki A."/>
            <person name="Okamura-Oho Y."/>
            <person name="Suzuki H."/>
            <person name="Kawai J."/>
            <person name="Hayashizaki Y."/>
        </authorList>
    </citation>
    <scope>NUCLEOTIDE SEQUENCE [LARGE SCALE MRNA] (ISOFORM 3)</scope>
    <source>
        <strain>NOD</strain>
        <tissue>Dendritic cell</tissue>
    </source>
</reference>
<reference key="4">
    <citation type="journal article" date="2004" name="Genome Res.">
        <title>The status, quality, and expansion of the NIH full-length cDNA project: the Mammalian Gene Collection (MGC).</title>
        <authorList>
            <consortium name="The MGC Project Team"/>
        </authorList>
    </citation>
    <scope>NUCLEOTIDE SEQUENCE [LARGE SCALE MRNA] (ISOFORM 1)</scope>
    <scope>NUCLEOTIDE SEQUENCE [LARGE SCALE MRNA] OF 311-548 (ISOFORM 4)</scope>
    <source>
        <strain>C57BL/6J</strain>
        <strain>Czech II</strain>
        <strain>FVB/N</strain>
        <tissue>Brain</tissue>
        <tissue>Mammary tumor</tissue>
        <tissue>Salivary gland</tissue>
    </source>
</reference>
<reference key="5">
    <citation type="journal article" date="2003" name="Int. J. Cancer">
        <title>Direct interaction with and activation of p53 by SMAR1 retards cell-cycle progression at G2/M phase and delays tumor growth in mice.</title>
        <authorList>
            <person name="Kaul R."/>
            <person name="Mukherjee S."/>
            <person name="Ahmed F."/>
            <person name="Bhat M.K."/>
            <person name="Chhipa R."/>
            <person name="Galande S."/>
            <person name="Chattopadhyay S."/>
        </authorList>
    </citation>
    <scope>FUNCTION</scope>
    <scope>INTERACTION WITH TP53</scope>
    <scope>TISSUE SPECIFICITY</scope>
    <scope>SUBCELLULAR LOCATION</scope>
</reference>
<reference key="6">
    <citation type="journal article" date="2004" name="Nucleic Acids Res.">
        <title>SMAR1 and Cux/CDP modulate chromatin and act as negative regulators of the TCRbeta enhancer (Ebeta).</title>
        <authorList>
            <person name="Kaul-Ghanekar R."/>
            <person name="Jalota-Badhwar A."/>
            <person name="Pavithra L."/>
            <person name="Tucker P."/>
            <person name="Chattopadhyay S."/>
        </authorList>
    </citation>
    <scope>FUNCTION</scope>
    <scope>INTERACTION WITH CUX1</scope>
    <scope>SUBCELLULAR LOCATION</scope>
</reference>
<reference key="7">
    <citation type="journal article" date="2005" name="J. Biol. Chem.">
        <title>Abnormal V(D)J recombination of T cell receptor beta locus in SMAR1 transgenic mice.</title>
        <authorList>
            <person name="Kaul-Ghanekar R."/>
            <person name="Majumdar S."/>
            <person name="Jalota-Badhwar A."/>
            <person name="Gulati N."/>
            <person name="Dubey N."/>
            <person name="Saha B."/>
            <person name="Chattopadhyay S."/>
        </authorList>
    </citation>
    <scope>FUNCTION</scope>
</reference>
<reference key="8">
    <citation type="journal article" date="2005" name="J. Biol. Chem.">
        <title>Tumor suppressor SMAR1 activates and stabilizes p53 through its arginine-serine-rich motif.</title>
        <authorList>
            <person name="Jalota-Badhwar A."/>
            <person name="Singh K."/>
            <person name="Pavithra L."/>
            <person name="Kaul-Ghanekar R."/>
            <person name="Jameel S."/>
            <person name="Chattopadhyay S."/>
        </authorList>
    </citation>
    <scope>RETRACTED PAPER</scope>
</reference>
<reference key="9">
    <citation type="journal article" date="2020" name="J. Biol. Chem.">
        <authorList>
            <person name="Jalota A."/>
            <person name="Singh K."/>
            <person name="Pavithra L."/>
            <person name="Kaul-Ghanekar R."/>
            <person name="Jameel S."/>
            <person name="Chattopadhyay S."/>
        </authorList>
    </citation>
    <scope>RETRACTION NOTICE OF PUBMED:15701641</scope>
</reference>
<reference key="10">
    <citation type="journal article" date="2005" name="Mol. Cell. Biol.">
        <title>Tumor suppressor SMAR1 mediates cyclin D1 repression by recruitment of the SIN3/histone deacetylase 1 complex.</title>
        <authorList>
            <person name="Rampalli S."/>
            <person name="Pavithra L."/>
            <person name="Bhatt A."/>
            <person name="Kundu T.K."/>
            <person name="Chattopadhyay S."/>
        </authorList>
    </citation>
    <scope>FUNCTION</scope>
    <scope>INTERACTION WITH HDAC1</scope>
    <scope>IDENTIFICATION IN A COMPLEX WITH HDAC1; SIN3A; SIN3B; RBL1 AND RBL2</scope>
    <scope>SUBCELLULAR LOCATION</scope>
</reference>
<reference key="11">
    <citation type="journal article" date="2007" name="J. Biol. Chem.">
        <title>SMAR1-derived P44 peptide retains its tumor suppressor function through modulation of p53.</title>
        <authorList>
            <person name="Jalota-Badhwar A."/>
            <person name="Kaul-Ghanekar R."/>
            <person name="Mogare D."/>
            <person name="Boppana R."/>
            <person name="Paknikar K.M."/>
            <person name="Chattopadhyay S."/>
        </authorList>
    </citation>
    <scope>FUNCTION</scope>
    <scope>PHOSPHORYLATION AT SER-347</scope>
    <scope>MUTAGENESIS OF SER-347; SER-348; SER-349 AND SER-350</scope>
</reference>
<reference key="12">
    <citation type="journal article" date="2013" name="Mol. Cell">
        <title>SIRT5-mediated lysine desuccinylation impacts diverse metabolic pathways.</title>
        <authorList>
            <person name="Park J."/>
            <person name="Chen Y."/>
            <person name="Tishkoff D.X."/>
            <person name="Peng C."/>
            <person name="Tan M."/>
            <person name="Dai L."/>
            <person name="Xie Z."/>
            <person name="Zhang Y."/>
            <person name="Zwaans B.M."/>
            <person name="Skinner M.E."/>
            <person name="Lombard D.B."/>
            <person name="Zhao Y."/>
        </authorList>
    </citation>
    <scope>ACETYLATION [LARGE SCALE ANALYSIS] AT LYS-283</scope>
    <scope>IDENTIFICATION BY MASS SPECTROMETRY [LARGE SCALE ANALYSIS]</scope>
    <source>
        <tissue>Embryonic fibroblast</tissue>
    </source>
</reference>
<reference key="13">
    <citation type="journal article" date="2015" name="Proc. Natl. Acad. Sci. U.S.A.">
        <title>Nuclear matrix-associated protein SMAR1 regulates alternative splicing via HDAC6-mediated deacetylation of Sam68.</title>
        <authorList>
            <person name="Nakka K.K."/>
            <person name="Chaudhary N."/>
            <person name="Joshi S."/>
            <person name="Bhat J."/>
            <person name="Singh K."/>
            <person name="Chatterjee S."/>
            <person name="Malhotra R."/>
            <person name="De A."/>
            <person name="Santra M.K."/>
            <person name="Dilworth F.J."/>
            <person name="Chattopadhyay S."/>
        </authorList>
    </citation>
    <scope>PHOSPHORYLATION AT THR-345 AND THR-360</scope>
    <scope>MUTAGENESIS OF THR-345 AND THR-360</scope>
</reference>
<organism>
    <name type="scientific">Mus musculus</name>
    <name type="common">Mouse</name>
    <dbReference type="NCBI Taxonomy" id="10090"/>
    <lineage>
        <taxon>Eukaryota</taxon>
        <taxon>Metazoa</taxon>
        <taxon>Chordata</taxon>
        <taxon>Craniata</taxon>
        <taxon>Vertebrata</taxon>
        <taxon>Euteleostomi</taxon>
        <taxon>Mammalia</taxon>
        <taxon>Eutheria</taxon>
        <taxon>Euarchontoglires</taxon>
        <taxon>Glires</taxon>
        <taxon>Rodentia</taxon>
        <taxon>Myomorpha</taxon>
        <taxon>Muroidea</taxon>
        <taxon>Muridae</taxon>
        <taxon>Murinae</taxon>
        <taxon>Mus</taxon>
        <taxon>Mus</taxon>
    </lineage>
</organism>
<proteinExistence type="evidence at protein level"/>
<comment type="function">
    <text evidence="1 6 7 8 9 11 12">Controls V(D)J recombination during T-cell development by repressing T-cell receptor (TCR) beta enhancer function (PubMed:10950932, PubMed:12494467, PubMed:15623522). Binds to scaffold/matrix attachment region beta (S/MARbeta), an ATC-rich DNA sequence located upstream of the TCR beta enhancer (PubMed:10950932, PubMed:15371550). Represses cyclin D1 transcription by recruiting HDAC1 to its promoter, thereby diminishing H3K9ac, H3S10ph and H4K8ac levels (PubMed:16166625). Promotes TP53 activation, which causes cell cycle arrest and inhibits tumor growth (PubMed:12494467, PubMed:17229733). Plays a role in the regulation of alternative splicing (By similarity). Binds to CD44 pre-mRNA and negatively regulates the inclusion of CD44 proximal variable exons v2-v6 but has no effect on distal variable exons v7-v10 (By similarity).</text>
</comment>
<comment type="subunit">
    <text evidence="1 7 8 11">Part of a corepressor complex containing BANP, HDAC1, SIN3A, SIN3B, RBL1 and RBL2 (PubMed:16166625). Forms a trimeric complex in the nucleus consisting of BANP, HDAC6 and KHDRBS1/SAM68; HDAC6 keeps KHDRBS1 in a deacetylated state which inhibits the inclusion of CD44 alternate exons (By similarity). The complex is disrupted by MAPK1/MAPK3-mediated phosphorylation of BANP which results in BANP export to the cytoplasm (By similarity). This facilitates acetylation of KHDRBS1 and CD44 variant exon inclusion (By similarity). Interacts with TP53 (PubMed:12494467). Interacts with CUX1/CDP (PubMed:15371550). Interacts with HDAC1 (PubMed:16166625).</text>
</comment>
<comment type="subcellular location">
    <subcellularLocation>
        <location evidence="5 7 8 11">Nucleus</location>
    </subcellularLocation>
    <subcellularLocation>
        <location evidence="1">Nucleus speckle</location>
    </subcellularLocation>
    <subcellularLocation>
        <location evidence="1">Cytoplasm</location>
    </subcellularLocation>
    <text evidence="1">Primarily nuclear but translocates to the cytoplasm following MAPK1/MAPK3-mediated phosphorylation.</text>
</comment>
<comment type="alternative products">
    <event type="alternative splicing"/>
    <isoform>
        <id>Q8VBU8-1</id>
        <name>1</name>
        <name>Long</name>
        <sequence type="displayed"/>
    </isoform>
    <isoform>
        <id>Q8VBU8-2</id>
        <name>2</name>
        <sequence type="described" ref="VSP_027403"/>
    </isoform>
    <isoform>
        <id>Q8VBU8-3</id>
        <name>3</name>
        <name>Short</name>
        <sequence type="described" ref="VSP_027403 VSP_027404"/>
    </isoform>
    <isoform>
        <id>Q8VBU8-4</id>
        <name>4</name>
        <sequence type="described" ref="VSP_027405"/>
    </isoform>
</comment>
<comment type="tissue specificity">
    <text evidence="5 6 7">Highly expressed in heart, spleen, and thymus. Isoform 1 is highly expressed in kidney, brain and testis. Isoform 3 is highly expressed in kidney and lung.</text>
</comment>
<comment type="PTM">
    <text evidence="13">MAPK1/MAPK3-mediated phosphorylation at Thr-345 and Thr-360 results in export to the cytoplasm.</text>
</comment>
<comment type="similarity">
    <text evidence="18">Belongs to the BANP/SMAR1 family.</text>
</comment>
<comment type="caution">
    <text evidence="5 7 8 10 11 20">Interaction with TP35 was reported to promote TP53 'Ser-15' phosphorylation and nuclear accumulation causing cell cycle arrest and inhibition of tumor growth (PubMed:15701641). However, the publication has been retracted due to image duplication and manipulation. Interaction with TP35 has been confirmed by other studies (PubMed:12494467). The nuclear localization has been confirmed by other studies (PubMed:10940556, PubMed:12494467, PubMed:15371550, PubMed:16166625).</text>
</comment>
<name>BANP_MOUSE</name>
<gene>
    <name type="primary">Banp</name>
    <name type="synonym">Smar1</name>
</gene>
<protein>
    <recommendedName>
        <fullName>Protein BANP</fullName>
    </recommendedName>
    <alternativeName>
        <fullName>Btg3-associated nuclear protein</fullName>
    </alternativeName>
    <alternativeName>
        <fullName>Scaffold/matrix-associated region-1-binding protein</fullName>
    </alternativeName>
</protein>
<accession>Q8VBU8</accession>
<accession>O88973</accession>
<accession>Q3U4R5</accession>
<accession>Q91YZ1</accession>
<accession>Q9ES51</accession>
<sequence length="548" mass="59657">MMSEQDLADVVQIAVEDLSPDHPVVLENHVVTDDDEPALKRQRLEINCQDPSIKSFLYSINQTICLRLDSIEAKLQALEATCKSLEEKLDLVTNKQHSPIQVPMVAGSPLGATQTCNKVRCVVPQTTVILNNDRQNAIVAKMEDPLSNRAPDSLENIISNAVPGRRQNTIVVKVPGQDDSHNEDGESGSEASDSVSNCGQPGSQNIGSNVTLITLNSEEDYPNGTWLGDENNPEMRVRCAIIPSDMLHISTNCRTAEKMALTLLDYLFHREVQAVSNLSGQGKHGKKQLDPLTIYGIRCHLFYKFGITESDWYRIKQSIDSKCRTAWRRKQRGQSLAVKSFSRRTPSSSSYSASETMMGTPPPTSELQQSQPQALHYALANAQQVQIHQIGEDGQVQVIPQGHLHIAQVPQGEQVQITQDSEGNLQIHHVGQDGQSWGLCQNPIPVSGDSVAQANPSQLWPLGGDTLDLPAGNEMIQVLQGAQLIAVASSDPAATGVDGSPLQGSDIQVQYVQLAPVSDHTAAAQTAEALQPTLQPDMQLEHGAIQIQ</sequence>
<keyword id="KW-0007">Acetylation</keyword>
<keyword id="KW-0025">Alternative splicing</keyword>
<keyword id="KW-0131">Cell cycle</keyword>
<keyword id="KW-0156">Chromatin regulator</keyword>
<keyword id="KW-0175">Coiled coil</keyword>
<keyword id="KW-0963">Cytoplasm</keyword>
<keyword id="KW-0217">Developmental protein</keyword>
<keyword id="KW-0238">DNA-binding</keyword>
<keyword id="KW-1017">Isopeptide bond</keyword>
<keyword id="KW-0539">Nucleus</keyword>
<keyword id="KW-0597">Phosphoprotein</keyword>
<keyword id="KW-1185">Reference proteome</keyword>
<keyword id="KW-0678">Repressor</keyword>
<keyword id="KW-0694">RNA-binding</keyword>
<keyword id="KW-0804">Transcription</keyword>
<keyword id="KW-0805">Transcription regulation</keyword>
<keyword id="KW-0832">Ubl conjugation</keyword>
<dbReference type="EMBL" id="AF091234">
    <property type="protein sequence ID" value="AAC36358.1"/>
    <property type="molecule type" value="mRNA"/>
</dbReference>
<dbReference type="EMBL" id="AF235503">
    <property type="protein sequence ID" value="AAG16659.1"/>
    <property type="molecule type" value="mRNA"/>
</dbReference>
<dbReference type="EMBL" id="AK154088">
    <property type="protein sequence ID" value="BAE32366.1"/>
    <property type="molecule type" value="mRNA"/>
</dbReference>
<dbReference type="EMBL" id="BC013339">
    <property type="protein sequence ID" value="AAH13339.1"/>
    <property type="molecule type" value="mRNA"/>
</dbReference>
<dbReference type="EMBL" id="BC021650">
    <property type="protein sequence ID" value="AAH21650.1"/>
    <property type="molecule type" value="mRNA"/>
</dbReference>
<dbReference type="EMBL" id="BC022168">
    <property type="protein sequence ID" value="AAH22168.1"/>
    <property type="molecule type" value="mRNA"/>
</dbReference>
<dbReference type="EMBL" id="BC062641">
    <property type="protein sequence ID" value="AAH62641.1"/>
    <property type="molecule type" value="mRNA"/>
</dbReference>
<dbReference type="CCDS" id="CCDS40502.1">
    <molecule id="Q8VBU8-1"/>
</dbReference>
<dbReference type="CCDS" id="CCDS72176.1">
    <molecule id="Q8VBU8-2"/>
</dbReference>
<dbReference type="CCDS" id="CCDS72177.1">
    <molecule id="Q8VBU8-3"/>
</dbReference>
<dbReference type="RefSeq" id="NP_001103570.1">
    <property type="nucleotide sequence ID" value="NM_001110100.2"/>
</dbReference>
<dbReference type="RefSeq" id="NP_001272910.1">
    <molecule id="Q8VBU8-2"/>
    <property type="nucleotide sequence ID" value="NM_001285981.1"/>
</dbReference>
<dbReference type="RefSeq" id="NP_001272912.1">
    <molecule id="Q8VBU8-3"/>
    <property type="nucleotide sequence ID" value="NM_001285983.1"/>
</dbReference>
<dbReference type="RefSeq" id="NP_058092.2">
    <molecule id="Q8VBU8-1"/>
    <property type="nucleotide sequence ID" value="NM_016812.4"/>
</dbReference>
<dbReference type="RefSeq" id="XP_011246744.1">
    <molecule id="Q8VBU8-4"/>
    <property type="nucleotide sequence ID" value="XM_011248442.1"/>
</dbReference>
<dbReference type="RefSeq" id="XP_017168388.1">
    <molecule id="Q8VBU8-1"/>
    <property type="nucleotide sequence ID" value="XM_017312899.2"/>
</dbReference>
<dbReference type="SMR" id="Q8VBU8"/>
<dbReference type="BioGRID" id="207288">
    <property type="interactions" value="1"/>
</dbReference>
<dbReference type="FunCoup" id="Q8VBU8">
    <property type="interactions" value="3161"/>
</dbReference>
<dbReference type="IntAct" id="Q8VBU8">
    <property type="interactions" value="1"/>
</dbReference>
<dbReference type="STRING" id="10090.ENSMUSP00000132095"/>
<dbReference type="iPTMnet" id="Q8VBU8"/>
<dbReference type="PhosphoSitePlus" id="Q8VBU8"/>
<dbReference type="PaxDb" id="10090-ENSMUSP00000132095"/>
<dbReference type="PeptideAtlas" id="Q8VBU8"/>
<dbReference type="ProteomicsDB" id="273537">
    <molecule id="Q8VBU8-1"/>
</dbReference>
<dbReference type="ProteomicsDB" id="273538">
    <molecule id="Q8VBU8-2"/>
</dbReference>
<dbReference type="ProteomicsDB" id="273539">
    <molecule id="Q8VBU8-3"/>
</dbReference>
<dbReference type="ProteomicsDB" id="273540">
    <molecule id="Q8VBU8-4"/>
</dbReference>
<dbReference type="Pumba" id="Q8VBU8"/>
<dbReference type="Antibodypedia" id="30702">
    <property type="antibodies" value="160 antibodies from 31 providers"/>
</dbReference>
<dbReference type="DNASU" id="53325"/>
<dbReference type="Ensembl" id="ENSMUST00000026354.15">
    <molecule id="Q8VBU8-2"/>
    <property type="protein sequence ID" value="ENSMUSP00000026354.9"/>
    <property type="gene ID" value="ENSMUSG00000025316.17"/>
</dbReference>
<dbReference type="Ensembl" id="ENSMUST00000093078.13">
    <molecule id="Q8VBU8-3"/>
    <property type="protein sequence ID" value="ENSMUSP00000090766.7"/>
    <property type="gene ID" value="ENSMUSG00000025316.17"/>
</dbReference>
<dbReference type="Ensembl" id="ENSMUST00000170857.8">
    <molecule id="Q8VBU8-1"/>
    <property type="protein sequence ID" value="ENSMUSP00000132095.2"/>
    <property type="gene ID" value="ENSMUSG00000025316.17"/>
</dbReference>
<dbReference type="Ensembl" id="ENSMUST00000173254.8">
    <molecule id="Q8VBU8-4"/>
    <property type="protein sequence ID" value="ENSMUSP00000133783.2"/>
    <property type="gene ID" value="ENSMUSG00000025316.17"/>
</dbReference>
<dbReference type="GeneID" id="53325"/>
<dbReference type="KEGG" id="mmu:53325"/>
<dbReference type="UCSC" id="uc009nsg.3">
    <molecule id="Q8VBU8-1"/>
    <property type="organism name" value="mouse"/>
</dbReference>
<dbReference type="UCSC" id="uc009nsh.3">
    <molecule id="Q8VBU8-3"/>
    <property type="organism name" value="mouse"/>
</dbReference>
<dbReference type="UCSC" id="uc033jih.1">
    <molecule id="Q8VBU8-2"/>
    <property type="organism name" value="mouse"/>
</dbReference>
<dbReference type="AGR" id="MGI:1889023"/>
<dbReference type="CTD" id="54971"/>
<dbReference type="MGI" id="MGI:1889023">
    <property type="gene designation" value="Banp"/>
</dbReference>
<dbReference type="VEuPathDB" id="HostDB:ENSMUSG00000025316"/>
<dbReference type="eggNOG" id="ENOG502QRIF">
    <property type="taxonomic scope" value="Eukaryota"/>
</dbReference>
<dbReference type="GeneTree" id="ENSGT00390000011116"/>
<dbReference type="InParanoid" id="Q8VBU8"/>
<dbReference type="OMA" id="TQQVQIH"/>
<dbReference type="OrthoDB" id="10052653at2759"/>
<dbReference type="PhylomeDB" id="Q8VBU8"/>
<dbReference type="TreeFam" id="TF331908"/>
<dbReference type="Reactome" id="R-MMU-6804759">
    <property type="pathway name" value="Regulation of TP53 Activity through Association with Co-factors"/>
</dbReference>
<dbReference type="BioGRID-ORCS" id="53325">
    <property type="hits" value="18 hits in 63 CRISPR screens"/>
</dbReference>
<dbReference type="ChiTaRS" id="Banp">
    <property type="organism name" value="mouse"/>
</dbReference>
<dbReference type="PRO" id="PR:Q8VBU8"/>
<dbReference type="Proteomes" id="UP000000589">
    <property type="component" value="Chromosome 8"/>
</dbReference>
<dbReference type="RNAct" id="Q8VBU8">
    <property type="molecule type" value="protein"/>
</dbReference>
<dbReference type="Bgee" id="ENSMUSG00000025316">
    <property type="expression patterns" value="Expressed in embryonic post-anal tail and 187 other cell types or tissues"/>
</dbReference>
<dbReference type="ExpressionAtlas" id="Q8VBU8">
    <property type="expression patterns" value="baseline and differential"/>
</dbReference>
<dbReference type="GO" id="GO:0005737">
    <property type="term" value="C:cytoplasm"/>
    <property type="evidence" value="ECO:0007669"/>
    <property type="project" value="UniProtKB-SubCell"/>
</dbReference>
<dbReference type="GO" id="GO:0016607">
    <property type="term" value="C:nuclear speck"/>
    <property type="evidence" value="ECO:0007669"/>
    <property type="project" value="UniProtKB-SubCell"/>
</dbReference>
<dbReference type="GO" id="GO:0005634">
    <property type="term" value="C:nucleus"/>
    <property type="evidence" value="ECO:0000314"/>
    <property type="project" value="MGI"/>
</dbReference>
<dbReference type="GO" id="GO:0003677">
    <property type="term" value="F:DNA binding"/>
    <property type="evidence" value="ECO:0007669"/>
    <property type="project" value="UniProtKB-KW"/>
</dbReference>
<dbReference type="GO" id="GO:0006325">
    <property type="term" value="P:chromatin organization"/>
    <property type="evidence" value="ECO:0007669"/>
    <property type="project" value="UniProtKB-KW"/>
</dbReference>
<dbReference type="GO" id="GO:0045893">
    <property type="term" value="P:positive regulation of DNA-templated transcription"/>
    <property type="evidence" value="ECO:0000315"/>
    <property type="project" value="CACAO"/>
</dbReference>
<dbReference type="FunFam" id="1.10.10.2590:FF:000001">
    <property type="entry name" value="protein BANP isoform X1"/>
    <property type="match status" value="1"/>
</dbReference>
<dbReference type="Gene3D" id="1.10.10.2590">
    <property type="entry name" value="BEN domain"/>
    <property type="match status" value="1"/>
</dbReference>
<dbReference type="InterPro" id="IPR042343">
    <property type="entry name" value="BANP"/>
</dbReference>
<dbReference type="InterPro" id="IPR018379">
    <property type="entry name" value="BEN_domain"/>
</dbReference>
<dbReference type="PANTHER" id="PTHR16243">
    <property type="entry name" value="BTG3-ASSOCIATED NUCLEAR PROTEIN BANP"/>
    <property type="match status" value="1"/>
</dbReference>
<dbReference type="PANTHER" id="PTHR16243:SF2">
    <property type="entry name" value="PROTEIN BANP"/>
    <property type="match status" value="1"/>
</dbReference>
<dbReference type="Pfam" id="PF10523">
    <property type="entry name" value="BEN"/>
    <property type="match status" value="1"/>
</dbReference>
<dbReference type="SMART" id="SM01025">
    <property type="entry name" value="BEN"/>
    <property type="match status" value="1"/>
</dbReference>
<dbReference type="PROSITE" id="PS51457">
    <property type="entry name" value="BEN"/>
    <property type="match status" value="1"/>
</dbReference>